<comment type="function">
    <text evidence="1">An accessory protein needed during the final step in the assembly of 30S ribosomal subunit, possibly for assembly of the head region. Essential for efficient processing of 16S rRNA. May be needed both before and after RbfA during the maturation of 16S rRNA. It has affinity for free ribosomal 30S subunits but not for 70S ribosomes.</text>
</comment>
<comment type="subunit">
    <text evidence="1">Binds ribosomal protein uS19.</text>
</comment>
<comment type="subcellular location">
    <subcellularLocation>
        <location evidence="1">Cytoplasm</location>
    </subcellularLocation>
</comment>
<comment type="domain">
    <text evidence="1">The PRC barrel domain binds ribosomal protein uS19.</text>
</comment>
<comment type="similarity">
    <text evidence="1">Belongs to the RimM family.</text>
</comment>
<reference key="1">
    <citation type="journal article" date="2008" name="J. Bacteriol.">
        <title>Insights into the environmental resistance gene pool from the genome sequence of the multidrug-resistant environmental isolate Escherichia coli SMS-3-5.</title>
        <authorList>
            <person name="Fricke W.F."/>
            <person name="Wright M.S."/>
            <person name="Lindell A.H."/>
            <person name="Harkins D.M."/>
            <person name="Baker-Austin C."/>
            <person name="Ravel J."/>
            <person name="Stepanauskas R."/>
        </authorList>
    </citation>
    <scope>NUCLEOTIDE SEQUENCE [LARGE SCALE GENOMIC DNA]</scope>
    <source>
        <strain>SMS-3-5 / SECEC</strain>
    </source>
</reference>
<proteinExistence type="inferred from homology"/>
<evidence type="ECO:0000255" key="1">
    <source>
        <dbReference type="HAMAP-Rule" id="MF_00014"/>
    </source>
</evidence>
<keyword id="KW-0143">Chaperone</keyword>
<keyword id="KW-0963">Cytoplasm</keyword>
<keyword id="KW-0690">Ribosome biogenesis</keyword>
<keyword id="KW-0698">rRNA processing</keyword>
<organism>
    <name type="scientific">Escherichia coli (strain SMS-3-5 / SECEC)</name>
    <dbReference type="NCBI Taxonomy" id="439855"/>
    <lineage>
        <taxon>Bacteria</taxon>
        <taxon>Pseudomonadati</taxon>
        <taxon>Pseudomonadota</taxon>
        <taxon>Gammaproteobacteria</taxon>
        <taxon>Enterobacterales</taxon>
        <taxon>Enterobacteriaceae</taxon>
        <taxon>Escherichia</taxon>
    </lineage>
</organism>
<sequence>MMSKQLTAQAPVDPIVLGKMGSSYGIRGWLRVFSSTEDAESIFDYQPWFIQKAGQWQQVQLESWKHHNQDMIIKLKGVDDRDAANLLTNCEIVVDSSQLPQLEEGDYYWKDLMGCQVVTTEGYDLGKVVDMMETGSNDVLVIKANLKDAFGIKERLVPFLDGQVIKKVDLTTRSIEVDWDPGF</sequence>
<name>RIMM_ECOSM</name>
<dbReference type="EMBL" id="CP000970">
    <property type="protein sequence ID" value="ACB17119.1"/>
    <property type="molecule type" value="Genomic_DNA"/>
</dbReference>
<dbReference type="SMR" id="B1LPB5"/>
<dbReference type="KEGG" id="ecm:EcSMS35_2760"/>
<dbReference type="HOGENOM" id="CLU_077636_1_0_6"/>
<dbReference type="Proteomes" id="UP000007011">
    <property type="component" value="Chromosome"/>
</dbReference>
<dbReference type="GO" id="GO:0005737">
    <property type="term" value="C:cytoplasm"/>
    <property type="evidence" value="ECO:0007669"/>
    <property type="project" value="UniProtKB-SubCell"/>
</dbReference>
<dbReference type="GO" id="GO:0005840">
    <property type="term" value="C:ribosome"/>
    <property type="evidence" value="ECO:0007669"/>
    <property type="project" value="InterPro"/>
</dbReference>
<dbReference type="GO" id="GO:0043022">
    <property type="term" value="F:ribosome binding"/>
    <property type="evidence" value="ECO:0007669"/>
    <property type="project" value="InterPro"/>
</dbReference>
<dbReference type="GO" id="GO:0042274">
    <property type="term" value="P:ribosomal small subunit biogenesis"/>
    <property type="evidence" value="ECO:0007669"/>
    <property type="project" value="UniProtKB-UniRule"/>
</dbReference>
<dbReference type="GO" id="GO:0006364">
    <property type="term" value="P:rRNA processing"/>
    <property type="evidence" value="ECO:0007669"/>
    <property type="project" value="UniProtKB-UniRule"/>
</dbReference>
<dbReference type="FunFam" id="2.30.30.240:FF:000001">
    <property type="entry name" value="Ribosome maturation factor RimM"/>
    <property type="match status" value="1"/>
</dbReference>
<dbReference type="FunFam" id="2.40.30.60:FF:000001">
    <property type="entry name" value="Ribosome maturation factor RimM"/>
    <property type="match status" value="1"/>
</dbReference>
<dbReference type="Gene3D" id="2.30.30.240">
    <property type="entry name" value="PRC-barrel domain"/>
    <property type="match status" value="1"/>
</dbReference>
<dbReference type="Gene3D" id="2.40.30.60">
    <property type="entry name" value="RimM"/>
    <property type="match status" value="1"/>
</dbReference>
<dbReference type="HAMAP" id="MF_00014">
    <property type="entry name" value="Ribosome_mat_RimM"/>
    <property type="match status" value="1"/>
</dbReference>
<dbReference type="InterPro" id="IPR011033">
    <property type="entry name" value="PRC_barrel-like_sf"/>
</dbReference>
<dbReference type="InterPro" id="IPR056792">
    <property type="entry name" value="PRC_RimM"/>
</dbReference>
<dbReference type="InterPro" id="IPR011961">
    <property type="entry name" value="RimM"/>
</dbReference>
<dbReference type="InterPro" id="IPR002676">
    <property type="entry name" value="RimM_N"/>
</dbReference>
<dbReference type="InterPro" id="IPR036976">
    <property type="entry name" value="RimM_N_sf"/>
</dbReference>
<dbReference type="InterPro" id="IPR009000">
    <property type="entry name" value="Transl_B-barrel_sf"/>
</dbReference>
<dbReference type="NCBIfam" id="TIGR02273">
    <property type="entry name" value="16S_RimM"/>
    <property type="match status" value="1"/>
</dbReference>
<dbReference type="PANTHER" id="PTHR33692">
    <property type="entry name" value="RIBOSOME MATURATION FACTOR RIMM"/>
    <property type="match status" value="1"/>
</dbReference>
<dbReference type="PANTHER" id="PTHR33692:SF1">
    <property type="entry name" value="RIBOSOME MATURATION FACTOR RIMM"/>
    <property type="match status" value="1"/>
</dbReference>
<dbReference type="Pfam" id="PF24986">
    <property type="entry name" value="PRC_RimM"/>
    <property type="match status" value="1"/>
</dbReference>
<dbReference type="Pfam" id="PF01782">
    <property type="entry name" value="RimM"/>
    <property type="match status" value="1"/>
</dbReference>
<dbReference type="SUPFAM" id="SSF50346">
    <property type="entry name" value="PRC-barrel domain"/>
    <property type="match status" value="1"/>
</dbReference>
<dbReference type="SUPFAM" id="SSF50447">
    <property type="entry name" value="Translation proteins"/>
    <property type="match status" value="1"/>
</dbReference>
<gene>
    <name evidence="1" type="primary">rimM</name>
    <name type="ordered locus">EcSMS35_2760</name>
</gene>
<protein>
    <recommendedName>
        <fullName evidence="1">Ribosome maturation factor RimM</fullName>
    </recommendedName>
</protein>
<feature type="chain" id="PRO_0000351756" description="Ribosome maturation factor RimM">
    <location>
        <begin position="1"/>
        <end position="183"/>
    </location>
</feature>
<feature type="domain" description="PRC barrel" evidence="1">
    <location>
        <begin position="104"/>
        <end position="183"/>
    </location>
</feature>
<accession>B1LPB5</accession>